<name>NEP_I05A1</name>
<organism>
    <name type="scientific">Influenza A virus (strain A/Goose/Guangxi/345/2005 H5N1 genotype G)</name>
    <dbReference type="NCBI Taxonomy" id="365089"/>
    <lineage>
        <taxon>Viruses</taxon>
        <taxon>Riboviria</taxon>
        <taxon>Orthornavirae</taxon>
        <taxon>Negarnaviricota</taxon>
        <taxon>Polyploviricotina</taxon>
        <taxon>Insthoviricetes</taxon>
        <taxon>Articulavirales</taxon>
        <taxon>Orthomyxoviridae</taxon>
        <taxon>Alphainfluenzavirus</taxon>
        <taxon>Alphainfluenzavirus influenzae</taxon>
        <taxon>Influenza A virus</taxon>
    </lineage>
</organism>
<gene>
    <name type="primary">NS</name>
</gene>
<evidence type="ECO:0000250" key="1"/>
<evidence type="ECO:0000305" key="2"/>
<proteinExistence type="inferred from homology"/>
<sequence>TVSSFQDILMRMSKMQLGYSSEDLNGMITRFESLKLYRDSLGEAVIRMGDLHSLQTRNGKWREQLSHKFEEIRWLIEEVRHRLKITENSFEQITFMQALQLLLEVEQEMRTFSFQLI</sequence>
<accession>P0C5U4</accession>
<keyword id="KW-0025">Alternative splicing</keyword>
<keyword id="KW-1048">Host nucleus</keyword>
<keyword id="KW-0945">Host-virus interaction</keyword>
<keyword id="KW-0813">Transport</keyword>
<keyword id="KW-0946">Virion</keyword>
<reference key="1">
    <citation type="journal article" date="2006" name="Proc. Natl. Acad. Sci. U.S.A.">
        <title>Emergence and predominance of an H5N1 influenza variant in China.</title>
        <authorList>
            <person name="Smith G.J."/>
            <person name="Fan X.H."/>
            <person name="Wang J."/>
            <person name="Li K.S."/>
            <person name="Qin K."/>
            <person name="Zhang J.X."/>
            <person name="Vijaykrishna D."/>
            <person name="Cheung C.L."/>
            <person name="Huang K."/>
            <person name="Rayner J.M."/>
            <person name="Peiris J.S."/>
            <person name="Chen H."/>
            <person name="Webster R.G."/>
            <person name="Guan Y."/>
        </authorList>
    </citation>
    <scope>NUCLEOTIDE SEQUENCE [GENOMIC RNA]</scope>
</reference>
<feature type="chain" id="PRO_0000311741" description="Nuclear export protein">
    <location>
        <begin position="1" status="less than"/>
        <end position="117"/>
    </location>
</feature>
<feature type="short sequence motif" description="Nuclear export signal" evidence="1">
    <location>
        <begin position="8"/>
        <end position="17"/>
    </location>
</feature>
<feature type="short sequence motif" description="Nuclear export signal" evidence="1">
    <location>
        <begin position="81"/>
        <end position="90"/>
    </location>
</feature>
<feature type="non-terminal residue">
    <location>
        <position position="1"/>
    </location>
</feature>
<protein>
    <recommendedName>
        <fullName>Nuclear export protein</fullName>
        <shortName>NEP</shortName>
    </recommendedName>
    <alternativeName>
        <fullName>Non-structural protein 2</fullName>
        <shortName>NS2</shortName>
    </alternativeName>
</protein>
<organismHost>
    <name type="scientific">Aves</name>
    <dbReference type="NCBI Taxonomy" id="8782"/>
</organismHost>
<organismHost>
    <name type="scientific">Felis catus</name>
    <name type="common">Cat</name>
    <name type="synonym">Felis silvestris catus</name>
    <dbReference type="NCBI Taxonomy" id="9685"/>
</organismHost>
<organismHost>
    <name type="scientific">Homo sapiens</name>
    <name type="common">Human</name>
    <dbReference type="NCBI Taxonomy" id="9606"/>
</organismHost>
<organismHost>
    <name type="scientific">Panthera pardus</name>
    <name type="common">Leopard</name>
    <name type="synonym">Felis pardus</name>
    <dbReference type="NCBI Taxonomy" id="9691"/>
</organismHost>
<organismHost>
    <name type="scientific">Panthera tigris</name>
    <name type="common">Tiger</name>
    <dbReference type="NCBI Taxonomy" id="9694"/>
</organismHost>
<organismHost>
    <name type="scientific">Sus scrofa</name>
    <name type="common">Pig</name>
    <dbReference type="NCBI Taxonomy" id="9823"/>
</organismHost>
<comment type="function">
    <text evidence="1">Mediates the nuclear export of encapsidated genomic RNAs (ribonucleoproteins, RNPs). Acts as an adapter between viral RNPs complexes and the nuclear export machinery of the cell. Possesses no intrinsic RNA-binding activity, but includes a C-terminal M1-binding domain. This domain is believed to allow recognition of RNPs to which the M1 protein is bound. Because the M1 protein is not available in large quantities until the later stages of infection, such an indirect recognition mechanism probably ensures that genomic RNPs are not exported from the nucleus before sufficient quantities of viral mRNA and progeny genomic RNA have been synthesized. Furthermore, the RNPs enters the cytoplasm only when they have associated with the M1 protein that is necessary to guide them to the plasma membrane. May down-regulate viral RNA synthesis when overproduced (By similarity).</text>
</comment>
<comment type="subunit">
    <text evidence="1">Binds M1 protein. May interact with human nucleoporin RAB/HRB and exportin XPO1/CRM1 (By similarity).</text>
</comment>
<comment type="subcellular location">
    <subcellularLocation>
        <location evidence="2">Virion</location>
    </subcellularLocation>
    <subcellularLocation>
        <location evidence="1">Host nucleus</location>
    </subcellularLocation>
</comment>
<comment type="alternative products">
    <event type="alternative splicing"/>
    <isoform>
        <id>P0C5U4-1</id>
        <name>NEP</name>
        <name>NS2</name>
        <sequence type="displayed"/>
    </isoform>
    <isoform>
        <id>Q2F4N6-1</id>
        <name>NS1</name>
        <sequence type="external"/>
    </isoform>
</comment>
<comment type="miscellaneous">
    <text>Average number present in a viral particle is estimated to be 130-200 molecules.</text>
</comment>
<comment type="similarity">
    <text evidence="2">Belongs to the influenza viruses NEP family.</text>
</comment>
<dbReference type="EMBL" id="DQ321159">
    <property type="status" value="NOT_ANNOTATED_CDS"/>
    <property type="molecule type" value="Genomic_RNA"/>
</dbReference>
<dbReference type="SMR" id="P0C5U4"/>
<dbReference type="GO" id="GO:0042025">
    <property type="term" value="C:host cell nucleus"/>
    <property type="evidence" value="ECO:0007669"/>
    <property type="project" value="UniProtKB-SubCell"/>
</dbReference>
<dbReference type="GO" id="GO:0044423">
    <property type="term" value="C:virion component"/>
    <property type="evidence" value="ECO:0007669"/>
    <property type="project" value="UniProtKB-KW"/>
</dbReference>
<dbReference type="GO" id="GO:0039675">
    <property type="term" value="P:exit of virus from host cell nucleus through nuclear pore"/>
    <property type="evidence" value="ECO:0007669"/>
    <property type="project" value="InterPro"/>
</dbReference>
<dbReference type="Gene3D" id="1.10.287.230">
    <property type="match status" value="1"/>
</dbReference>
<dbReference type="InterPro" id="IPR000968">
    <property type="entry name" value="Flu_NS2"/>
</dbReference>
<dbReference type="Pfam" id="PF00601">
    <property type="entry name" value="Flu_NS2"/>
    <property type="match status" value="1"/>
</dbReference>
<dbReference type="SUPFAM" id="SSF101156">
    <property type="entry name" value="Nonstructural protein ns2, Nep, M1-binding domain"/>
    <property type="match status" value="1"/>
</dbReference>